<comment type="subcellular location">
    <subcellularLocation>
        <location evidence="2">Cell membrane</location>
        <topology evidence="2">Multi-pass membrane protein</topology>
    </subcellularLocation>
</comment>
<comment type="similarity">
    <text evidence="2">To R.meliloti ExoD.</text>
</comment>
<feature type="chain" id="PRO_0000157897" description="Uncharacterized protein slr1875">
    <location>
        <begin position="1"/>
        <end position="212"/>
    </location>
</feature>
<feature type="transmembrane region" description="Helical" evidence="1">
    <location>
        <begin position="34"/>
        <end position="54"/>
    </location>
</feature>
<feature type="transmembrane region" description="Helical" evidence="1">
    <location>
        <begin position="59"/>
        <end position="79"/>
    </location>
</feature>
<feature type="transmembrane region" description="Helical" evidence="1">
    <location>
        <begin position="126"/>
        <end position="146"/>
    </location>
</feature>
<feature type="transmembrane region" description="Helical" evidence="1">
    <location>
        <begin position="171"/>
        <end position="191"/>
    </location>
</feature>
<organism>
    <name type="scientific">Synechocystis sp. (strain ATCC 27184 / PCC 6803 / Kazusa)</name>
    <dbReference type="NCBI Taxonomy" id="1111708"/>
    <lineage>
        <taxon>Bacteria</taxon>
        <taxon>Bacillati</taxon>
        <taxon>Cyanobacteriota</taxon>
        <taxon>Cyanophyceae</taxon>
        <taxon>Synechococcales</taxon>
        <taxon>Merismopediaceae</taxon>
        <taxon>Synechocystis</taxon>
    </lineage>
</organism>
<evidence type="ECO:0000255" key="1"/>
<evidence type="ECO:0000305" key="2"/>
<accession>P73633</accession>
<dbReference type="EMBL" id="BA000022">
    <property type="protein sequence ID" value="BAA17678.1"/>
    <property type="molecule type" value="Genomic_DNA"/>
</dbReference>
<dbReference type="PIR" id="S77120">
    <property type="entry name" value="S77120"/>
</dbReference>
<dbReference type="SMR" id="P73633"/>
<dbReference type="STRING" id="1148.gene:10498545"/>
<dbReference type="PaxDb" id="1148-1652759"/>
<dbReference type="EnsemblBacteria" id="BAA17678">
    <property type="protein sequence ID" value="BAA17678"/>
    <property type="gene ID" value="BAA17678"/>
</dbReference>
<dbReference type="KEGG" id="syn:slr1875"/>
<dbReference type="eggNOG" id="COG3932">
    <property type="taxonomic scope" value="Bacteria"/>
</dbReference>
<dbReference type="InParanoid" id="P73633"/>
<dbReference type="Proteomes" id="UP000001425">
    <property type="component" value="Chromosome"/>
</dbReference>
<dbReference type="GO" id="GO:0005886">
    <property type="term" value="C:plasma membrane"/>
    <property type="evidence" value="ECO:0007669"/>
    <property type="project" value="UniProtKB-SubCell"/>
</dbReference>
<dbReference type="InterPro" id="IPR010331">
    <property type="entry name" value="ExoD"/>
</dbReference>
<dbReference type="PANTHER" id="PTHR41795">
    <property type="entry name" value="EXOPOLYSACCHARIDE SYNTHESIS PROTEIN"/>
    <property type="match status" value="1"/>
</dbReference>
<dbReference type="PANTHER" id="PTHR41795:SF1">
    <property type="entry name" value="EXOPOLYSACCHARIDE SYNTHESIS PROTEIN"/>
    <property type="match status" value="1"/>
</dbReference>
<dbReference type="Pfam" id="PF06055">
    <property type="entry name" value="ExoD"/>
    <property type="match status" value="1"/>
</dbReference>
<dbReference type="PIRSF" id="PIRSF033239">
    <property type="entry name" value="ExoD"/>
    <property type="match status" value="1"/>
</dbReference>
<reference key="1">
    <citation type="journal article" date="1996" name="DNA Res.">
        <title>Sequence analysis of the genome of the unicellular cyanobacterium Synechocystis sp. strain PCC6803. II. Sequence determination of the entire genome and assignment of potential protein-coding regions.</title>
        <authorList>
            <person name="Kaneko T."/>
            <person name="Sato S."/>
            <person name="Kotani H."/>
            <person name="Tanaka A."/>
            <person name="Asamizu E."/>
            <person name="Nakamura Y."/>
            <person name="Miyajima N."/>
            <person name="Hirosawa M."/>
            <person name="Sugiura M."/>
            <person name="Sasamoto S."/>
            <person name="Kimura T."/>
            <person name="Hosouchi T."/>
            <person name="Matsuno A."/>
            <person name="Muraki A."/>
            <person name="Nakazaki N."/>
            <person name="Naruo K."/>
            <person name="Okumura S."/>
            <person name="Shimpo S."/>
            <person name="Takeuchi C."/>
            <person name="Wada T."/>
            <person name="Watanabe A."/>
            <person name="Yamada M."/>
            <person name="Yasuda M."/>
            <person name="Tabata S."/>
        </authorList>
    </citation>
    <scope>NUCLEOTIDE SEQUENCE [LARGE SCALE GENOMIC DNA]</scope>
    <source>
        <strain>ATCC 27184 / PCC 6803 / Kazusa</strain>
    </source>
</reference>
<gene>
    <name type="ordered locus">slr1875</name>
</gene>
<name>Y1875_SYNY3</name>
<sequence length="212" mass="22988">MARLSQELQDYFFKEDRGPTVNLAQVLAIAKEKIFGIVLVILSLPSALPIPAPGYSTPFGVLIFLVAIQLMAGRQELWLPLSWQSKTIKTSKAQGIVKAGLPWLKRLEAIAHPRFPLVCQSRLGKILMGITVGSMAISMMIPIPGTNTLPAMSIFITGFGLQEDDGLITGAGMIFSVLIGVLMVSVIYVFFNGGITIIDILKDWLKVQFGGA</sequence>
<keyword id="KW-1003">Cell membrane</keyword>
<keyword id="KW-0472">Membrane</keyword>
<keyword id="KW-1185">Reference proteome</keyword>
<keyword id="KW-0812">Transmembrane</keyword>
<keyword id="KW-1133">Transmembrane helix</keyword>
<proteinExistence type="predicted"/>
<protein>
    <recommendedName>
        <fullName>Uncharacterized protein slr1875</fullName>
    </recommendedName>
</protein>